<protein>
    <recommendedName>
        <fullName evidence="1">Chaperone protein DnaK</fullName>
    </recommendedName>
    <alternativeName>
        <fullName evidence="1">HSP70</fullName>
    </alternativeName>
    <alternativeName>
        <fullName evidence="1">Heat shock 70 kDa protein</fullName>
    </alternativeName>
    <alternativeName>
        <fullName evidence="1">Heat shock protein 70</fullName>
    </alternativeName>
</protein>
<organism>
    <name type="scientific">Thermotoga petrophila (strain ATCC BAA-488 / DSM 13995 / JCM 10881 / RKU-1)</name>
    <dbReference type="NCBI Taxonomy" id="390874"/>
    <lineage>
        <taxon>Bacteria</taxon>
        <taxon>Thermotogati</taxon>
        <taxon>Thermotogota</taxon>
        <taxon>Thermotogae</taxon>
        <taxon>Thermotogales</taxon>
        <taxon>Thermotogaceae</taxon>
        <taxon>Thermotoga</taxon>
    </lineage>
</organism>
<evidence type="ECO:0000255" key="1">
    <source>
        <dbReference type="HAMAP-Rule" id="MF_00332"/>
    </source>
</evidence>
<feature type="chain" id="PRO_1000059692" description="Chaperone protein DnaK">
    <location>
        <begin position="1"/>
        <end position="596"/>
    </location>
</feature>
<feature type="modified residue" description="Phosphothreonine; by autocatalysis" evidence="1">
    <location>
        <position position="180"/>
    </location>
</feature>
<name>DNAK_THEP1</name>
<keyword id="KW-0067">ATP-binding</keyword>
<keyword id="KW-0143">Chaperone</keyword>
<keyword id="KW-0547">Nucleotide-binding</keyword>
<keyword id="KW-0597">Phosphoprotein</keyword>
<keyword id="KW-0346">Stress response</keyword>
<dbReference type="EMBL" id="CP000702">
    <property type="protein sequence ID" value="ABQ46565.1"/>
    <property type="molecule type" value="Genomic_DNA"/>
</dbReference>
<dbReference type="RefSeq" id="WP_004083187.1">
    <property type="nucleotide sequence ID" value="NC_009486.1"/>
</dbReference>
<dbReference type="SMR" id="A5IK42"/>
<dbReference type="STRING" id="390874.Tpet_0544"/>
<dbReference type="KEGG" id="tpt:Tpet_0544"/>
<dbReference type="eggNOG" id="COG0443">
    <property type="taxonomic scope" value="Bacteria"/>
</dbReference>
<dbReference type="HOGENOM" id="CLU_005965_2_4_0"/>
<dbReference type="Proteomes" id="UP000006558">
    <property type="component" value="Chromosome"/>
</dbReference>
<dbReference type="GO" id="GO:0005524">
    <property type="term" value="F:ATP binding"/>
    <property type="evidence" value="ECO:0007669"/>
    <property type="project" value="UniProtKB-UniRule"/>
</dbReference>
<dbReference type="GO" id="GO:0140662">
    <property type="term" value="F:ATP-dependent protein folding chaperone"/>
    <property type="evidence" value="ECO:0007669"/>
    <property type="project" value="InterPro"/>
</dbReference>
<dbReference type="GO" id="GO:0051082">
    <property type="term" value="F:unfolded protein binding"/>
    <property type="evidence" value="ECO:0007669"/>
    <property type="project" value="InterPro"/>
</dbReference>
<dbReference type="CDD" id="cd10234">
    <property type="entry name" value="ASKHA_NBD_HSP70_DnaK-like"/>
    <property type="match status" value="1"/>
</dbReference>
<dbReference type="FunFam" id="3.30.30.30:FF:000014">
    <property type="entry name" value="Chaperone protein DnaK"/>
    <property type="match status" value="1"/>
</dbReference>
<dbReference type="FunFam" id="2.60.34.10:FF:000014">
    <property type="entry name" value="Chaperone protein DnaK HSP70"/>
    <property type="match status" value="1"/>
</dbReference>
<dbReference type="FunFam" id="1.20.1270.10:FF:000001">
    <property type="entry name" value="Molecular chaperone DnaK"/>
    <property type="match status" value="1"/>
</dbReference>
<dbReference type="FunFam" id="3.30.420.40:FF:000071">
    <property type="entry name" value="Molecular chaperone DnaK"/>
    <property type="match status" value="1"/>
</dbReference>
<dbReference type="FunFam" id="3.90.640.10:FF:000003">
    <property type="entry name" value="Molecular chaperone DnaK"/>
    <property type="match status" value="1"/>
</dbReference>
<dbReference type="Gene3D" id="1.20.1270.10">
    <property type="match status" value="1"/>
</dbReference>
<dbReference type="Gene3D" id="3.30.30.30">
    <property type="match status" value="1"/>
</dbReference>
<dbReference type="Gene3D" id="3.30.420.40">
    <property type="match status" value="3"/>
</dbReference>
<dbReference type="Gene3D" id="3.90.640.10">
    <property type="entry name" value="Actin, Chain A, domain 4"/>
    <property type="match status" value="1"/>
</dbReference>
<dbReference type="Gene3D" id="2.60.34.10">
    <property type="entry name" value="Substrate Binding Domain Of DNAk, Chain A, domain 1"/>
    <property type="match status" value="1"/>
</dbReference>
<dbReference type="HAMAP" id="MF_00332">
    <property type="entry name" value="DnaK"/>
    <property type="match status" value="1"/>
</dbReference>
<dbReference type="InterPro" id="IPR043129">
    <property type="entry name" value="ATPase_NBD"/>
</dbReference>
<dbReference type="InterPro" id="IPR012725">
    <property type="entry name" value="Chaperone_DnaK"/>
</dbReference>
<dbReference type="InterPro" id="IPR018181">
    <property type="entry name" value="Heat_shock_70_CS"/>
</dbReference>
<dbReference type="InterPro" id="IPR029048">
    <property type="entry name" value="HSP70_C_sf"/>
</dbReference>
<dbReference type="InterPro" id="IPR029047">
    <property type="entry name" value="HSP70_peptide-bd_sf"/>
</dbReference>
<dbReference type="InterPro" id="IPR013126">
    <property type="entry name" value="Hsp_70_fam"/>
</dbReference>
<dbReference type="NCBIfam" id="NF001413">
    <property type="entry name" value="PRK00290.1"/>
    <property type="match status" value="1"/>
</dbReference>
<dbReference type="NCBIfam" id="TIGR02350">
    <property type="entry name" value="prok_dnaK"/>
    <property type="match status" value="1"/>
</dbReference>
<dbReference type="PANTHER" id="PTHR19375">
    <property type="entry name" value="HEAT SHOCK PROTEIN 70KDA"/>
    <property type="match status" value="1"/>
</dbReference>
<dbReference type="Pfam" id="PF00012">
    <property type="entry name" value="HSP70"/>
    <property type="match status" value="1"/>
</dbReference>
<dbReference type="PRINTS" id="PR00301">
    <property type="entry name" value="HEATSHOCK70"/>
</dbReference>
<dbReference type="SUPFAM" id="SSF53067">
    <property type="entry name" value="Actin-like ATPase domain"/>
    <property type="match status" value="2"/>
</dbReference>
<dbReference type="SUPFAM" id="SSF100920">
    <property type="entry name" value="Heat shock protein 70kD (HSP70), peptide-binding domain"/>
    <property type="match status" value="1"/>
</dbReference>
<dbReference type="PROSITE" id="PS00297">
    <property type="entry name" value="HSP70_1"/>
    <property type="match status" value="1"/>
</dbReference>
<dbReference type="PROSITE" id="PS00329">
    <property type="entry name" value="HSP70_2"/>
    <property type="match status" value="1"/>
</dbReference>
<dbReference type="PROSITE" id="PS01036">
    <property type="entry name" value="HSP70_3"/>
    <property type="match status" value="1"/>
</dbReference>
<reference key="1">
    <citation type="submission" date="2007-05" db="EMBL/GenBank/DDBJ databases">
        <title>Complete sequence of Thermotoga petrophila RKU-1.</title>
        <authorList>
            <consortium name="US DOE Joint Genome Institute"/>
            <person name="Copeland A."/>
            <person name="Lucas S."/>
            <person name="Lapidus A."/>
            <person name="Barry K."/>
            <person name="Glavina del Rio T."/>
            <person name="Dalin E."/>
            <person name="Tice H."/>
            <person name="Pitluck S."/>
            <person name="Sims D."/>
            <person name="Brettin T."/>
            <person name="Bruce D."/>
            <person name="Detter J.C."/>
            <person name="Han C."/>
            <person name="Tapia R."/>
            <person name="Schmutz J."/>
            <person name="Larimer F."/>
            <person name="Land M."/>
            <person name="Hauser L."/>
            <person name="Kyrpides N."/>
            <person name="Mikhailova N."/>
            <person name="Nelson K."/>
            <person name="Gogarten J.P."/>
            <person name="Noll K."/>
            <person name="Richardson P."/>
        </authorList>
    </citation>
    <scope>NUCLEOTIDE SEQUENCE [LARGE SCALE GENOMIC DNA]</scope>
    <source>
        <strain>ATCC BAA-488 / DSM 13995 / JCM 10881 / RKU-1</strain>
    </source>
</reference>
<gene>
    <name evidence="1" type="primary">dnaK</name>
    <name type="ordered locus">Tpet_0544</name>
</gene>
<proteinExistence type="inferred from homology"/>
<sequence length="596" mass="66052">MAEKKEFVVGIDLGTTNSVIAWMKPDGTVEVIPNAEGSRVTPSVVAFTKSGEILVGEPAKRQMILNPERTIKSIKRKMGTDYKVRIDDKEYTPQEISAFILKKLKNDAEAYLGGEIKKAVITCPAYFNDAQRQATKEAGIIAGLEVLRIINEPTAAALAYGLDKAGKEEKVLVYDLGGGTFDVSILEIGEGVIEVIATAGNNHLGGDDFDQRLIDWMAEEFKKQHGIDLREDRQALQRLRDAAEKAKIELSTKMETDVSLPFIAVSPSGQPLHLEMRITRSLFESLTRDLVEMTRGPIEQALNDAKLSPQDIDEIILVGGMTRVPMVQRFIKEFFGKEPNKSVNPDEAVAIGAAIQAAILAGTEGAKGRDIVLVDVTPLTLGIEVKGGLFEPIIPRNTKIPVRKSKIFTTVEDGQTEVEIRVYQGERPIARENIFLGSFKLVGIPPAPRGVPQIEVTFDIDSDGIVHVSAKDLGSGKEQSMVVTGRHKLSEDEIKRMIEDAKRYEEQDKRLKEEIELKNRADDLAYSVEKTLKEHGDKIPADLKSRLEDMIRELRDAINRNDIPKVKMLFDDLQKESMKIGEYLYKSATGGETSNQ</sequence>
<accession>A5IK42</accession>
<comment type="function">
    <text evidence="1">Acts as a chaperone.</text>
</comment>
<comment type="induction">
    <text evidence="1">By stress conditions e.g. heat shock.</text>
</comment>
<comment type="similarity">
    <text evidence="1">Belongs to the heat shock protein 70 family.</text>
</comment>